<evidence type="ECO:0000255" key="1">
    <source>
        <dbReference type="HAMAP-Rule" id="MF_00235"/>
    </source>
</evidence>
<reference key="1">
    <citation type="journal article" date="2010" name="Environ. Microbiol.">
        <title>The genome of Syntrophomonas wolfei: new insights into syntrophic metabolism and biohydrogen production.</title>
        <authorList>
            <person name="Sieber J.R."/>
            <person name="Sims D.R."/>
            <person name="Han C."/>
            <person name="Kim E."/>
            <person name="Lykidis A."/>
            <person name="Lapidus A.L."/>
            <person name="McDonnald E."/>
            <person name="Rohlin L."/>
            <person name="Culley D.E."/>
            <person name="Gunsalus R."/>
            <person name="McInerney M.J."/>
        </authorList>
    </citation>
    <scope>NUCLEOTIDE SEQUENCE [LARGE SCALE GENOMIC DNA]</scope>
    <source>
        <strain>DSM 2245B / Goettingen</strain>
    </source>
</reference>
<gene>
    <name evidence="1" type="primary">adk</name>
    <name type="ordered locus">Swol_2312</name>
</gene>
<sequence length="215" mass="23745">MNIILMGPPGAGKGTQAELLKARFPIPHISTGDIFRDAVNQGSELGQEAQKYMSSGQLVPDEITTAIVKERITQADCDSGFLLDGFPRTTDQAQALDQSLAELGKKVDLAINIDVPTQLLIERLSGRISCRECKRVYNLNFNPPREQGKCDSCGGELVQRNDDRGETVVKRLEVYNQQTRPLLQYYEAQGVLFNIEGSRGSGQVFADIQEKLESL</sequence>
<dbReference type="EC" id="2.7.4.3" evidence="1"/>
<dbReference type="EMBL" id="CP000448">
    <property type="protein sequence ID" value="ABI69603.1"/>
    <property type="molecule type" value="Genomic_DNA"/>
</dbReference>
<dbReference type="RefSeq" id="WP_011641687.1">
    <property type="nucleotide sequence ID" value="NC_008346.1"/>
</dbReference>
<dbReference type="SMR" id="Q0AUK1"/>
<dbReference type="STRING" id="335541.Swol_2312"/>
<dbReference type="KEGG" id="swo:Swol_2312"/>
<dbReference type="eggNOG" id="COG0563">
    <property type="taxonomic scope" value="Bacteria"/>
</dbReference>
<dbReference type="HOGENOM" id="CLU_032354_1_2_9"/>
<dbReference type="OrthoDB" id="9805030at2"/>
<dbReference type="UniPathway" id="UPA00588">
    <property type="reaction ID" value="UER00649"/>
</dbReference>
<dbReference type="Proteomes" id="UP000001968">
    <property type="component" value="Chromosome"/>
</dbReference>
<dbReference type="GO" id="GO:0005737">
    <property type="term" value="C:cytoplasm"/>
    <property type="evidence" value="ECO:0007669"/>
    <property type="project" value="UniProtKB-SubCell"/>
</dbReference>
<dbReference type="GO" id="GO:0004017">
    <property type="term" value="F:adenylate kinase activity"/>
    <property type="evidence" value="ECO:0007669"/>
    <property type="project" value="UniProtKB-UniRule"/>
</dbReference>
<dbReference type="GO" id="GO:0005524">
    <property type="term" value="F:ATP binding"/>
    <property type="evidence" value="ECO:0007669"/>
    <property type="project" value="UniProtKB-UniRule"/>
</dbReference>
<dbReference type="GO" id="GO:0008270">
    <property type="term" value="F:zinc ion binding"/>
    <property type="evidence" value="ECO:0007669"/>
    <property type="project" value="UniProtKB-UniRule"/>
</dbReference>
<dbReference type="GO" id="GO:0044209">
    <property type="term" value="P:AMP salvage"/>
    <property type="evidence" value="ECO:0007669"/>
    <property type="project" value="UniProtKB-UniRule"/>
</dbReference>
<dbReference type="CDD" id="cd01428">
    <property type="entry name" value="ADK"/>
    <property type="match status" value="1"/>
</dbReference>
<dbReference type="FunFam" id="3.40.50.300:FF:000106">
    <property type="entry name" value="Adenylate kinase mitochondrial"/>
    <property type="match status" value="1"/>
</dbReference>
<dbReference type="Gene3D" id="3.40.50.300">
    <property type="entry name" value="P-loop containing nucleotide triphosphate hydrolases"/>
    <property type="match status" value="1"/>
</dbReference>
<dbReference type="HAMAP" id="MF_00235">
    <property type="entry name" value="Adenylate_kinase_Adk"/>
    <property type="match status" value="1"/>
</dbReference>
<dbReference type="InterPro" id="IPR006259">
    <property type="entry name" value="Adenyl_kin_sub"/>
</dbReference>
<dbReference type="InterPro" id="IPR000850">
    <property type="entry name" value="Adenylat/UMP-CMP_kin"/>
</dbReference>
<dbReference type="InterPro" id="IPR033690">
    <property type="entry name" value="Adenylat_kinase_CS"/>
</dbReference>
<dbReference type="InterPro" id="IPR007862">
    <property type="entry name" value="Adenylate_kinase_lid-dom"/>
</dbReference>
<dbReference type="InterPro" id="IPR027417">
    <property type="entry name" value="P-loop_NTPase"/>
</dbReference>
<dbReference type="NCBIfam" id="TIGR01351">
    <property type="entry name" value="adk"/>
    <property type="match status" value="1"/>
</dbReference>
<dbReference type="NCBIfam" id="NF001380">
    <property type="entry name" value="PRK00279.1-2"/>
    <property type="match status" value="1"/>
</dbReference>
<dbReference type="NCBIfam" id="NF001381">
    <property type="entry name" value="PRK00279.1-3"/>
    <property type="match status" value="1"/>
</dbReference>
<dbReference type="NCBIfam" id="NF011100">
    <property type="entry name" value="PRK14527.1"/>
    <property type="match status" value="1"/>
</dbReference>
<dbReference type="PANTHER" id="PTHR23359">
    <property type="entry name" value="NUCLEOTIDE KINASE"/>
    <property type="match status" value="1"/>
</dbReference>
<dbReference type="Pfam" id="PF00406">
    <property type="entry name" value="ADK"/>
    <property type="match status" value="1"/>
</dbReference>
<dbReference type="Pfam" id="PF05191">
    <property type="entry name" value="ADK_lid"/>
    <property type="match status" value="1"/>
</dbReference>
<dbReference type="PRINTS" id="PR00094">
    <property type="entry name" value="ADENYLTKNASE"/>
</dbReference>
<dbReference type="SUPFAM" id="SSF52540">
    <property type="entry name" value="P-loop containing nucleoside triphosphate hydrolases"/>
    <property type="match status" value="1"/>
</dbReference>
<dbReference type="PROSITE" id="PS00113">
    <property type="entry name" value="ADENYLATE_KINASE"/>
    <property type="match status" value="1"/>
</dbReference>
<name>KAD_SYNWW</name>
<accession>Q0AUK1</accession>
<proteinExistence type="inferred from homology"/>
<protein>
    <recommendedName>
        <fullName evidence="1">Adenylate kinase</fullName>
        <shortName evidence="1">AK</shortName>
        <ecNumber evidence="1">2.7.4.3</ecNumber>
    </recommendedName>
    <alternativeName>
        <fullName evidence="1">ATP-AMP transphosphorylase</fullName>
    </alternativeName>
    <alternativeName>
        <fullName evidence="1">ATP:AMP phosphotransferase</fullName>
    </alternativeName>
    <alternativeName>
        <fullName evidence="1">Adenylate monophosphate kinase</fullName>
    </alternativeName>
</protein>
<comment type="function">
    <text evidence="1">Catalyzes the reversible transfer of the terminal phosphate group between ATP and AMP. Plays an important role in cellular energy homeostasis and in adenine nucleotide metabolism.</text>
</comment>
<comment type="catalytic activity">
    <reaction evidence="1">
        <text>AMP + ATP = 2 ADP</text>
        <dbReference type="Rhea" id="RHEA:12973"/>
        <dbReference type="ChEBI" id="CHEBI:30616"/>
        <dbReference type="ChEBI" id="CHEBI:456215"/>
        <dbReference type="ChEBI" id="CHEBI:456216"/>
        <dbReference type="EC" id="2.7.4.3"/>
    </reaction>
</comment>
<comment type="pathway">
    <text evidence="1">Purine metabolism; AMP biosynthesis via salvage pathway; AMP from ADP: step 1/1.</text>
</comment>
<comment type="subunit">
    <text evidence="1">Monomer.</text>
</comment>
<comment type="subcellular location">
    <subcellularLocation>
        <location evidence="1">Cytoplasm</location>
    </subcellularLocation>
</comment>
<comment type="domain">
    <text evidence="1">Consists of three domains, a large central CORE domain and two small peripheral domains, NMPbind and LID, which undergo movements during catalysis. The LID domain closes over the site of phosphoryl transfer upon ATP binding. Assembling and dissambling the active center during each catalytic cycle provides an effective means to prevent ATP hydrolysis. Some bacteria have evolved a zinc-coordinating structure that stabilizes the LID domain.</text>
</comment>
<comment type="similarity">
    <text evidence="1">Belongs to the adenylate kinase family.</text>
</comment>
<feature type="chain" id="PRO_1000021777" description="Adenylate kinase">
    <location>
        <begin position="1"/>
        <end position="215"/>
    </location>
</feature>
<feature type="region of interest" description="NMP" evidence="1">
    <location>
        <begin position="30"/>
        <end position="59"/>
    </location>
</feature>
<feature type="region of interest" description="LID" evidence="1">
    <location>
        <begin position="126"/>
        <end position="163"/>
    </location>
</feature>
<feature type="binding site" evidence="1">
    <location>
        <begin position="10"/>
        <end position="15"/>
    </location>
    <ligand>
        <name>ATP</name>
        <dbReference type="ChEBI" id="CHEBI:30616"/>
    </ligand>
</feature>
<feature type="binding site" evidence="1">
    <location>
        <position position="31"/>
    </location>
    <ligand>
        <name>AMP</name>
        <dbReference type="ChEBI" id="CHEBI:456215"/>
    </ligand>
</feature>
<feature type="binding site" evidence="1">
    <location>
        <position position="36"/>
    </location>
    <ligand>
        <name>AMP</name>
        <dbReference type="ChEBI" id="CHEBI:456215"/>
    </ligand>
</feature>
<feature type="binding site" evidence="1">
    <location>
        <begin position="57"/>
        <end position="59"/>
    </location>
    <ligand>
        <name>AMP</name>
        <dbReference type="ChEBI" id="CHEBI:456215"/>
    </ligand>
</feature>
<feature type="binding site" evidence="1">
    <location>
        <begin position="85"/>
        <end position="88"/>
    </location>
    <ligand>
        <name>AMP</name>
        <dbReference type="ChEBI" id="CHEBI:456215"/>
    </ligand>
</feature>
<feature type="binding site" evidence="1">
    <location>
        <position position="92"/>
    </location>
    <ligand>
        <name>AMP</name>
        <dbReference type="ChEBI" id="CHEBI:456215"/>
    </ligand>
</feature>
<feature type="binding site" evidence="1">
    <location>
        <position position="127"/>
    </location>
    <ligand>
        <name>ATP</name>
        <dbReference type="ChEBI" id="CHEBI:30616"/>
    </ligand>
</feature>
<feature type="binding site" evidence="1">
    <location>
        <position position="130"/>
    </location>
    <ligand>
        <name>Zn(2+)</name>
        <dbReference type="ChEBI" id="CHEBI:29105"/>
        <note>structural</note>
    </ligand>
</feature>
<feature type="binding site" evidence="1">
    <location>
        <position position="133"/>
    </location>
    <ligand>
        <name>Zn(2+)</name>
        <dbReference type="ChEBI" id="CHEBI:29105"/>
        <note>structural</note>
    </ligand>
</feature>
<feature type="binding site" evidence="1">
    <location>
        <begin position="136"/>
        <end position="137"/>
    </location>
    <ligand>
        <name>ATP</name>
        <dbReference type="ChEBI" id="CHEBI:30616"/>
    </ligand>
</feature>
<feature type="binding site" evidence="1">
    <location>
        <position position="150"/>
    </location>
    <ligand>
        <name>Zn(2+)</name>
        <dbReference type="ChEBI" id="CHEBI:29105"/>
        <note>structural</note>
    </ligand>
</feature>
<feature type="binding site" evidence="1">
    <location>
        <position position="153"/>
    </location>
    <ligand>
        <name>Zn(2+)</name>
        <dbReference type="ChEBI" id="CHEBI:29105"/>
        <note>structural</note>
    </ligand>
</feature>
<feature type="binding site" evidence="1">
    <location>
        <position position="160"/>
    </location>
    <ligand>
        <name>AMP</name>
        <dbReference type="ChEBI" id="CHEBI:456215"/>
    </ligand>
</feature>
<feature type="binding site" evidence="1">
    <location>
        <position position="171"/>
    </location>
    <ligand>
        <name>AMP</name>
        <dbReference type="ChEBI" id="CHEBI:456215"/>
    </ligand>
</feature>
<feature type="binding site" evidence="1">
    <location>
        <position position="199"/>
    </location>
    <ligand>
        <name>ATP</name>
        <dbReference type="ChEBI" id="CHEBI:30616"/>
    </ligand>
</feature>
<keyword id="KW-0067">ATP-binding</keyword>
<keyword id="KW-0963">Cytoplasm</keyword>
<keyword id="KW-0418">Kinase</keyword>
<keyword id="KW-0479">Metal-binding</keyword>
<keyword id="KW-0545">Nucleotide biosynthesis</keyword>
<keyword id="KW-0547">Nucleotide-binding</keyword>
<keyword id="KW-1185">Reference proteome</keyword>
<keyword id="KW-0808">Transferase</keyword>
<keyword id="KW-0862">Zinc</keyword>
<organism>
    <name type="scientific">Syntrophomonas wolfei subsp. wolfei (strain DSM 2245B / Goettingen)</name>
    <dbReference type="NCBI Taxonomy" id="335541"/>
    <lineage>
        <taxon>Bacteria</taxon>
        <taxon>Bacillati</taxon>
        <taxon>Bacillota</taxon>
        <taxon>Clostridia</taxon>
        <taxon>Eubacteriales</taxon>
        <taxon>Syntrophomonadaceae</taxon>
        <taxon>Syntrophomonas</taxon>
    </lineage>
</organism>